<sequence>MYAVIATGGKQYKVQEGDAIYVEKIAAEVDSTIELNEVLAVSKEDGLVLGKPVVEGAKVVAKVEAQGKSKKIIVFKYKRKKDYRRKRGHRQAYTKLVIEKIQA</sequence>
<accession>Q97JL7</accession>
<keyword id="KW-1185">Reference proteome</keyword>
<keyword id="KW-0687">Ribonucleoprotein</keyword>
<keyword id="KW-0689">Ribosomal protein</keyword>
<keyword id="KW-0694">RNA-binding</keyword>
<keyword id="KW-0699">rRNA-binding</keyword>
<gene>
    <name evidence="1" type="primary">rplU</name>
    <name type="ordered locus">CA_C1257</name>
</gene>
<evidence type="ECO:0000255" key="1">
    <source>
        <dbReference type="HAMAP-Rule" id="MF_01363"/>
    </source>
</evidence>
<evidence type="ECO:0000305" key="2"/>
<dbReference type="EMBL" id="AE001437">
    <property type="protein sequence ID" value="AAK79228.1"/>
    <property type="molecule type" value="Genomic_DNA"/>
</dbReference>
<dbReference type="PIR" id="A97055">
    <property type="entry name" value="A97055"/>
</dbReference>
<dbReference type="RefSeq" id="NP_347888.1">
    <property type="nucleotide sequence ID" value="NC_003030.1"/>
</dbReference>
<dbReference type="RefSeq" id="WP_010964569.1">
    <property type="nucleotide sequence ID" value="NC_003030.1"/>
</dbReference>
<dbReference type="SMR" id="Q97JL7"/>
<dbReference type="STRING" id="272562.CA_C1257"/>
<dbReference type="KEGG" id="cac:CA_C1257"/>
<dbReference type="PATRIC" id="fig|272562.8.peg.1457"/>
<dbReference type="eggNOG" id="COG0261">
    <property type="taxonomic scope" value="Bacteria"/>
</dbReference>
<dbReference type="HOGENOM" id="CLU_061463_3_2_9"/>
<dbReference type="OrthoDB" id="9813334at2"/>
<dbReference type="Proteomes" id="UP000000814">
    <property type="component" value="Chromosome"/>
</dbReference>
<dbReference type="GO" id="GO:0005737">
    <property type="term" value="C:cytoplasm"/>
    <property type="evidence" value="ECO:0007669"/>
    <property type="project" value="UniProtKB-ARBA"/>
</dbReference>
<dbReference type="GO" id="GO:1990904">
    <property type="term" value="C:ribonucleoprotein complex"/>
    <property type="evidence" value="ECO:0007669"/>
    <property type="project" value="UniProtKB-KW"/>
</dbReference>
<dbReference type="GO" id="GO:0005840">
    <property type="term" value="C:ribosome"/>
    <property type="evidence" value="ECO:0007669"/>
    <property type="project" value="UniProtKB-KW"/>
</dbReference>
<dbReference type="GO" id="GO:0019843">
    <property type="term" value="F:rRNA binding"/>
    <property type="evidence" value="ECO:0007669"/>
    <property type="project" value="UniProtKB-UniRule"/>
</dbReference>
<dbReference type="GO" id="GO:0003735">
    <property type="term" value="F:structural constituent of ribosome"/>
    <property type="evidence" value="ECO:0007669"/>
    <property type="project" value="InterPro"/>
</dbReference>
<dbReference type="GO" id="GO:0006412">
    <property type="term" value="P:translation"/>
    <property type="evidence" value="ECO:0007669"/>
    <property type="project" value="UniProtKB-UniRule"/>
</dbReference>
<dbReference type="HAMAP" id="MF_01363">
    <property type="entry name" value="Ribosomal_bL21"/>
    <property type="match status" value="1"/>
</dbReference>
<dbReference type="InterPro" id="IPR028909">
    <property type="entry name" value="bL21-like"/>
</dbReference>
<dbReference type="InterPro" id="IPR036164">
    <property type="entry name" value="bL21-like_sf"/>
</dbReference>
<dbReference type="InterPro" id="IPR001787">
    <property type="entry name" value="Ribosomal_bL21"/>
</dbReference>
<dbReference type="InterPro" id="IPR018258">
    <property type="entry name" value="Ribosomal_bL21_CS"/>
</dbReference>
<dbReference type="NCBIfam" id="TIGR00061">
    <property type="entry name" value="L21"/>
    <property type="match status" value="1"/>
</dbReference>
<dbReference type="PANTHER" id="PTHR21349">
    <property type="entry name" value="50S RIBOSOMAL PROTEIN L21"/>
    <property type="match status" value="1"/>
</dbReference>
<dbReference type="PANTHER" id="PTHR21349:SF0">
    <property type="entry name" value="LARGE RIBOSOMAL SUBUNIT PROTEIN BL21M"/>
    <property type="match status" value="1"/>
</dbReference>
<dbReference type="Pfam" id="PF00829">
    <property type="entry name" value="Ribosomal_L21p"/>
    <property type="match status" value="1"/>
</dbReference>
<dbReference type="SUPFAM" id="SSF141091">
    <property type="entry name" value="L21p-like"/>
    <property type="match status" value="1"/>
</dbReference>
<dbReference type="PROSITE" id="PS01169">
    <property type="entry name" value="RIBOSOMAL_L21"/>
    <property type="match status" value="1"/>
</dbReference>
<organism>
    <name type="scientific">Clostridium acetobutylicum (strain ATCC 824 / DSM 792 / JCM 1419 / IAM 19013 / LMG 5710 / NBRC 13948 / NRRL B-527 / VKM B-1787 / 2291 / W)</name>
    <dbReference type="NCBI Taxonomy" id="272562"/>
    <lineage>
        <taxon>Bacteria</taxon>
        <taxon>Bacillati</taxon>
        <taxon>Bacillota</taxon>
        <taxon>Clostridia</taxon>
        <taxon>Eubacteriales</taxon>
        <taxon>Clostridiaceae</taxon>
        <taxon>Clostridium</taxon>
    </lineage>
</organism>
<name>RL21_CLOAB</name>
<protein>
    <recommendedName>
        <fullName evidence="1">Large ribosomal subunit protein bL21</fullName>
    </recommendedName>
    <alternativeName>
        <fullName evidence="2">50S ribosomal protein L21</fullName>
    </alternativeName>
</protein>
<proteinExistence type="inferred from homology"/>
<comment type="function">
    <text evidence="1">This protein binds to 23S rRNA in the presence of protein L20.</text>
</comment>
<comment type="subunit">
    <text evidence="1">Part of the 50S ribosomal subunit. Contacts protein L20.</text>
</comment>
<comment type="similarity">
    <text evidence="1">Belongs to the bacterial ribosomal protein bL21 family.</text>
</comment>
<feature type="chain" id="PRO_0000269302" description="Large ribosomal subunit protein bL21">
    <location>
        <begin position="1"/>
        <end position="103"/>
    </location>
</feature>
<reference key="1">
    <citation type="journal article" date="2001" name="J. Bacteriol.">
        <title>Genome sequence and comparative analysis of the solvent-producing bacterium Clostridium acetobutylicum.</title>
        <authorList>
            <person name="Noelling J."/>
            <person name="Breton G."/>
            <person name="Omelchenko M.V."/>
            <person name="Makarova K.S."/>
            <person name="Zeng Q."/>
            <person name="Gibson R."/>
            <person name="Lee H.M."/>
            <person name="Dubois J."/>
            <person name="Qiu D."/>
            <person name="Hitti J."/>
            <person name="Wolf Y.I."/>
            <person name="Tatusov R.L."/>
            <person name="Sabathe F."/>
            <person name="Doucette-Stamm L.A."/>
            <person name="Soucaille P."/>
            <person name="Daly M.J."/>
            <person name="Bennett G.N."/>
            <person name="Koonin E.V."/>
            <person name="Smith D.R."/>
        </authorList>
    </citation>
    <scope>NUCLEOTIDE SEQUENCE [LARGE SCALE GENOMIC DNA]</scope>
    <source>
        <strain>ATCC 824 / DSM 792 / JCM 1419 / IAM 19013 / LMG 5710 / NBRC 13948 / NRRL B-527 / VKM B-1787 / 2291 / W</strain>
    </source>
</reference>